<sequence length="82" mass="9451">MEPPVKINCPTCGRRFLSDETPAMPFCSKRCQLIDLGRWMNEEIGLPHEGDPGDAPVEYLDDRDLTQPSPERQNESFHRYSE</sequence>
<dbReference type="EMBL" id="BX294137">
    <property type="protein sequence ID" value="CAD72825.1"/>
    <property type="molecule type" value="Genomic_DNA"/>
</dbReference>
<dbReference type="RefSeq" id="NP_865141.1">
    <property type="nucleotide sequence ID" value="NC_005027.1"/>
</dbReference>
<dbReference type="RefSeq" id="WP_007339473.1">
    <property type="nucleotide sequence ID" value="NC_005027.1"/>
</dbReference>
<dbReference type="SMR" id="Q7UVA1"/>
<dbReference type="FunCoup" id="Q7UVA1">
    <property type="interactions" value="39"/>
</dbReference>
<dbReference type="STRING" id="243090.RB2774"/>
<dbReference type="EnsemblBacteria" id="CAD72825">
    <property type="protein sequence ID" value="CAD72825"/>
    <property type="gene ID" value="RB2774"/>
</dbReference>
<dbReference type="KEGG" id="rba:RB2774"/>
<dbReference type="PATRIC" id="fig|243090.15.peg.1276"/>
<dbReference type="eggNOG" id="COG3024">
    <property type="taxonomic scope" value="Bacteria"/>
</dbReference>
<dbReference type="HOGENOM" id="CLU_178280_3_1_0"/>
<dbReference type="InParanoid" id="Q7UVA1"/>
<dbReference type="OrthoDB" id="9809663at2"/>
<dbReference type="Proteomes" id="UP000001025">
    <property type="component" value="Chromosome"/>
</dbReference>
<dbReference type="GO" id="GO:0008657">
    <property type="term" value="F:DNA topoisomerase type II (double strand cut, ATP-hydrolyzing) inhibitor activity"/>
    <property type="evidence" value="ECO:0000318"/>
    <property type="project" value="GO_Central"/>
</dbReference>
<dbReference type="GO" id="GO:0008270">
    <property type="term" value="F:zinc ion binding"/>
    <property type="evidence" value="ECO:0007669"/>
    <property type="project" value="UniProtKB-UniRule"/>
</dbReference>
<dbReference type="GO" id="GO:0006355">
    <property type="term" value="P:regulation of DNA-templated transcription"/>
    <property type="evidence" value="ECO:0007669"/>
    <property type="project" value="InterPro"/>
</dbReference>
<dbReference type="Gene3D" id="3.30.50.10">
    <property type="entry name" value="Erythroid Transcription Factor GATA-1, subunit A"/>
    <property type="match status" value="1"/>
</dbReference>
<dbReference type="HAMAP" id="MF_00649">
    <property type="entry name" value="DNA_gyrase_inhibitor_YacG"/>
    <property type="match status" value="1"/>
</dbReference>
<dbReference type="InterPro" id="IPR005584">
    <property type="entry name" value="DNA_gyrase_inhibitor_YacG"/>
</dbReference>
<dbReference type="InterPro" id="IPR013088">
    <property type="entry name" value="Znf_NHR/GATA"/>
</dbReference>
<dbReference type="PANTHER" id="PTHR36150">
    <property type="entry name" value="DNA GYRASE INHIBITOR YACG"/>
    <property type="match status" value="1"/>
</dbReference>
<dbReference type="PANTHER" id="PTHR36150:SF1">
    <property type="entry name" value="DNA GYRASE INHIBITOR YACG"/>
    <property type="match status" value="1"/>
</dbReference>
<dbReference type="Pfam" id="PF03884">
    <property type="entry name" value="YacG"/>
    <property type="match status" value="1"/>
</dbReference>
<dbReference type="SUPFAM" id="SSF57716">
    <property type="entry name" value="Glucocorticoid receptor-like (DNA-binding domain)"/>
    <property type="match status" value="1"/>
</dbReference>
<name>YACG_RHOBA</name>
<protein>
    <recommendedName>
        <fullName evidence="1">DNA gyrase inhibitor YacG</fullName>
    </recommendedName>
</protein>
<proteinExistence type="inferred from homology"/>
<organism>
    <name type="scientific">Rhodopirellula baltica (strain DSM 10527 / NCIMB 13988 / SH1)</name>
    <dbReference type="NCBI Taxonomy" id="243090"/>
    <lineage>
        <taxon>Bacteria</taxon>
        <taxon>Pseudomonadati</taxon>
        <taxon>Planctomycetota</taxon>
        <taxon>Planctomycetia</taxon>
        <taxon>Pirellulales</taxon>
        <taxon>Pirellulaceae</taxon>
        <taxon>Rhodopirellula</taxon>
    </lineage>
</organism>
<keyword id="KW-0479">Metal-binding</keyword>
<keyword id="KW-1185">Reference proteome</keyword>
<keyword id="KW-0862">Zinc</keyword>
<feature type="chain" id="PRO_0000211721" description="DNA gyrase inhibitor YacG">
    <location>
        <begin position="1"/>
        <end position="82"/>
    </location>
</feature>
<feature type="region of interest" description="Disordered" evidence="2">
    <location>
        <begin position="44"/>
        <end position="82"/>
    </location>
</feature>
<feature type="compositionally biased region" description="Basic and acidic residues" evidence="2">
    <location>
        <begin position="72"/>
        <end position="82"/>
    </location>
</feature>
<feature type="binding site" evidence="1">
    <location>
        <position position="9"/>
    </location>
    <ligand>
        <name>Zn(2+)</name>
        <dbReference type="ChEBI" id="CHEBI:29105"/>
    </ligand>
</feature>
<feature type="binding site" evidence="1">
    <location>
        <position position="12"/>
    </location>
    <ligand>
        <name>Zn(2+)</name>
        <dbReference type="ChEBI" id="CHEBI:29105"/>
    </ligand>
</feature>
<feature type="binding site" evidence="1">
    <location>
        <position position="27"/>
    </location>
    <ligand>
        <name>Zn(2+)</name>
        <dbReference type="ChEBI" id="CHEBI:29105"/>
    </ligand>
</feature>
<feature type="binding site" evidence="1">
    <location>
        <position position="31"/>
    </location>
    <ligand>
        <name>Zn(2+)</name>
        <dbReference type="ChEBI" id="CHEBI:29105"/>
    </ligand>
</feature>
<comment type="function">
    <text evidence="1">Inhibits all the catalytic activities of DNA gyrase by preventing its interaction with DNA. Acts by binding directly to the C-terminal domain of GyrB, which probably disrupts DNA binding by the gyrase.</text>
</comment>
<comment type="cofactor">
    <cofactor evidence="1">
        <name>Zn(2+)</name>
        <dbReference type="ChEBI" id="CHEBI:29105"/>
    </cofactor>
    <text evidence="1">Binds 1 zinc ion.</text>
</comment>
<comment type="subunit">
    <text evidence="1">Interacts with GyrB.</text>
</comment>
<comment type="similarity">
    <text evidence="1">Belongs to the DNA gyrase inhibitor YacG family.</text>
</comment>
<reference key="1">
    <citation type="journal article" date="2003" name="Proc. Natl. Acad. Sci. U.S.A.">
        <title>Complete genome sequence of the marine planctomycete Pirellula sp. strain 1.</title>
        <authorList>
            <person name="Gloeckner F.O."/>
            <person name="Kube M."/>
            <person name="Bauer M."/>
            <person name="Teeling H."/>
            <person name="Lombardot T."/>
            <person name="Ludwig W."/>
            <person name="Gade D."/>
            <person name="Beck A."/>
            <person name="Borzym K."/>
            <person name="Heitmann K."/>
            <person name="Rabus R."/>
            <person name="Schlesner H."/>
            <person name="Amann R."/>
            <person name="Reinhardt R."/>
        </authorList>
    </citation>
    <scope>NUCLEOTIDE SEQUENCE [LARGE SCALE GENOMIC DNA]</scope>
    <source>
        <strain>DSM 10527 / NCIMB 13988 / SH1</strain>
    </source>
</reference>
<gene>
    <name evidence="1" type="primary">yacG</name>
    <name type="ordered locus">RB2774</name>
</gene>
<accession>Q7UVA1</accession>
<evidence type="ECO:0000255" key="1">
    <source>
        <dbReference type="HAMAP-Rule" id="MF_00649"/>
    </source>
</evidence>
<evidence type="ECO:0000256" key="2">
    <source>
        <dbReference type="SAM" id="MobiDB-lite"/>
    </source>
</evidence>